<comment type="function">
    <text evidence="5 8 9 10">Transmembrane protein of the plasma membrane of leukocytes that control their migration and activation through interaction with CXADR, a plasma membrane receptor found on adjacent epithelial and endothelial cells. The interaction between both receptors mediates the activation of gamma-delta T-cells, a subpopulation of T-cells residing in epithelia and involved in tissue homeostasis and repair. Upon epithelial CXADR-binding, JAML induces downstream cell signaling events in gamma-delta T-cells through PI3-kinase and MAP kinases. It results in proliferation and production of cytokines and growth factors by T-cells that in turn stimulate epithelial tissues repair. It also controls the transmigration of leukocytes within epithelial and endothelial tissues through adhesive interactions with epithelial and endothelial CXADR.</text>
</comment>
<comment type="subunit">
    <text evidence="8 10">Homodimer; active form in leukocyte-endothelial cell adhesion. Interacts (homodimeric form) with CXADR. Interacts (via cytoplasmic domain) with the PI3 kinase; upon CXADR-binding. Interacts with ITGA4 and ITGB1; integrin alpha-4/beta-1 may regulate leukocyte to endothelial cells adhesion by controlling JAML homodimerization.</text>
</comment>
<comment type="interaction">
    <interactant intactId="EBI-17244059">
        <id>Q86YT9-2</id>
    </interactant>
    <interactant intactId="EBI-3932027">
        <id>P21145</id>
        <label>MAL</label>
    </interactant>
    <organismsDiffer>false</organismsDiffer>
    <experiments>3</experiments>
</comment>
<comment type="subcellular location">
    <subcellularLocation>
        <location evidence="5">Cell membrane</location>
        <topology evidence="5">Single-pass type I membrane protein</topology>
    </subcellularLocation>
    <subcellularLocation>
        <location evidence="5">Cell junction</location>
    </subcellularLocation>
    <text>Localized at the plasma membrane and enriched in areas of cell-cell contacts (PubMed:12869515).</text>
</comment>
<comment type="alternative products">
    <event type="alternative splicing"/>
    <isoform>
        <id>Q86YT9-1</id>
        <name>1</name>
        <sequence type="displayed"/>
    </isoform>
    <isoform>
        <id>Q86YT9-2</id>
        <name>2</name>
        <sequence type="described" ref="VSP_014830"/>
    </isoform>
    <isoform>
        <id>Q86YT9-3</id>
        <name>3</name>
        <sequence type="described" ref="VSP_014831 VSP_014832"/>
    </isoform>
    <isoform>
        <id>Q86YT9-4</id>
        <name>4</name>
        <sequence type="described" ref="VSP_054911"/>
    </isoform>
</comment>
<comment type="tissue specificity">
    <text evidence="5 9 10">Expression is restricted to the hematopoietic tissues with the exception of liver. Expressed in fetal liver, spleen and thymus. Preferentially expressed by mature leukocytes (at protein level).</text>
</comment>
<comment type="induction">
    <text evidence="5">Up-regulated upon retinoic acid, Me2SO and PMA treatment in differentiating myeloid leukemia cells.</text>
</comment>
<comment type="domain">
    <text evidence="1 5 8">The Ig-like V-type domain 1 mediates interaction with CXADR (By similarity). The Ig-like V-type domain 2 may also play a role in the interaction (PubMed:15800062).</text>
</comment>
<comment type="similarity">
    <text evidence="14">Belongs to the immunoglobulin superfamily.</text>
</comment>
<comment type="sequence caution" evidence="14">
    <conflict type="erroneous initiation">
        <sequence resource="EMBL-CDS" id="BAC03390"/>
    </conflict>
    <text>Extended N-terminus.</text>
</comment>
<keyword id="KW-0025">Alternative splicing</keyword>
<keyword id="KW-0130">Cell adhesion</keyword>
<keyword id="KW-0965">Cell junction</keyword>
<keyword id="KW-1003">Cell membrane</keyword>
<keyword id="KW-0903">Direct protein sequencing</keyword>
<keyword id="KW-1015">Disulfide bond</keyword>
<keyword id="KW-0325">Glycoprotein</keyword>
<keyword id="KW-0391">Immunity</keyword>
<keyword id="KW-0393">Immunoglobulin domain</keyword>
<keyword id="KW-0472">Membrane</keyword>
<keyword id="KW-1267">Proteomics identification</keyword>
<keyword id="KW-1185">Reference proteome</keyword>
<keyword id="KW-0677">Repeat</keyword>
<keyword id="KW-0732">Signal</keyword>
<keyword id="KW-0812">Transmembrane</keyword>
<keyword id="KW-1133">Transmembrane helix</keyword>
<proteinExistence type="evidence at protein level"/>
<evidence type="ECO:0000250" key="1"/>
<evidence type="ECO:0000255" key="2"/>
<evidence type="ECO:0000255" key="3">
    <source>
        <dbReference type="PROSITE-ProRule" id="PRU00114"/>
    </source>
</evidence>
<evidence type="ECO:0000256" key="4">
    <source>
        <dbReference type="SAM" id="MobiDB-lite"/>
    </source>
</evidence>
<evidence type="ECO:0000269" key="5">
    <source>
    </source>
</evidence>
<evidence type="ECO:0000269" key="6">
    <source>
    </source>
</evidence>
<evidence type="ECO:0000269" key="7">
    <source>
    </source>
</evidence>
<evidence type="ECO:0000269" key="8">
    <source>
    </source>
</evidence>
<evidence type="ECO:0000269" key="9">
    <source>
    </source>
</evidence>
<evidence type="ECO:0000269" key="10">
    <source>
    </source>
</evidence>
<evidence type="ECO:0000269" key="11">
    <source ref="2"/>
</evidence>
<evidence type="ECO:0000303" key="12">
    <source>
    </source>
</evidence>
<evidence type="ECO:0000303" key="13">
    <source>
    </source>
</evidence>
<evidence type="ECO:0000305" key="14"/>
<evidence type="ECO:0000312" key="15">
    <source>
        <dbReference type="HGNC" id="HGNC:19084"/>
    </source>
</evidence>
<gene>
    <name evidence="15" type="primary">JAML</name>
    <name type="synonym">AMICA1</name>
    <name type="ORF">UNQ722/PRO1387</name>
</gene>
<feature type="signal peptide" evidence="7">
    <location>
        <begin position="1"/>
        <end position="19"/>
    </location>
</feature>
<feature type="chain" id="PRO_0000015074" description="Junctional adhesion molecule-like">
    <location>
        <begin position="20"/>
        <end position="394"/>
    </location>
</feature>
<feature type="topological domain" description="Extracellular" evidence="2">
    <location>
        <begin position="20"/>
        <end position="275"/>
    </location>
</feature>
<feature type="transmembrane region" description="Helical" evidence="2">
    <location>
        <begin position="276"/>
        <end position="296"/>
    </location>
</feature>
<feature type="topological domain" description="Cytoplasmic" evidence="2">
    <location>
        <begin position="297"/>
        <end position="394"/>
    </location>
</feature>
<feature type="domain" description="Ig-like V-type 1">
    <location>
        <begin position="20"/>
        <end position="132"/>
    </location>
</feature>
<feature type="domain" description="Ig-like V-type 2">
    <location>
        <begin position="137"/>
        <end position="250"/>
    </location>
</feature>
<feature type="region of interest" description="Disordered" evidence="4">
    <location>
        <begin position="369"/>
        <end position="394"/>
    </location>
</feature>
<feature type="compositionally biased region" description="Basic and acidic residues" evidence="4">
    <location>
        <begin position="372"/>
        <end position="383"/>
    </location>
</feature>
<feature type="glycosylation site" description="N-linked (GlcNAc...) asparagine" evidence="2">
    <location>
        <position position="76"/>
    </location>
</feature>
<feature type="glycosylation site" description="N-linked (GlcNAc...) asparagine" evidence="2">
    <location>
        <position position="231"/>
    </location>
</feature>
<feature type="disulfide bond" evidence="3">
    <location>
        <begin position="42"/>
        <end position="116"/>
    </location>
</feature>
<feature type="disulfide bond" evidence="3">
    <location>
        <begin position="155"/>
        <end position="234"/>
    </location>
</feature>
<feature type="splice variant" id="VSP_054911" description="In isoform 4." evidence="13">
    <location>
        <begin position="1"/>
        <end position="39"/>
    </location>
</feature>
<feature type="splice variant" id="VSP_014830" description="In isoform 2." evidence="12">
    <original>MFCPLKLILLPVLL</original>
    <variation>MVSG</variation>
    <location>
        <begin position="1"/>
        <end position="14"/>
    </location>
</feature>
<feature type="splice variant" id="VSP_014831" description="In isoform 3." evidence="12">
    <original>TL</original>
    <variation>SI</variation>
    <location>
        <begin position="258"/>
        <end position="259"/>
    </location>
</feature>
<feature type="splice variant" id="VSP_014832" description="In isoform 3." evidence="12">
    <location>
        <begin position="260"/>
        <end position="394"/>
    </location>
</feature>
<feature type="sequence variant" id="VAR_049974" description="In dbSNP:rs17121881." evidence="6 11">
    <original>I</original>
    <variation>N</variation>
    <location>
        <position position="94"/>
    </location>
</feature>
<feature type="sequence variant" id="VAR_049975" description="In dbSNP:rs1793174." evidence="5 6 11">
    <original>V</original>
    <variation>A</variation>
    <location>
        <position position="193"/>
    </location>
</feature>
<feature type="sequence variant" id="VAR_049976" description="In dbSNP:rs2298831.">
    <original>I</original>
    <variation>M</variation>
    <location>
        <position position="322"/>
    </location>
</feature>
<feature type="mutagenesis site" description="Loss of the ability to homodimerize, loss of interaction with CXADR and loss of function in cell-cell adhesion." evidence="5 10">
    <original>K</original>
    <variation>E</variation>
    <location>
        <position position="54"/>
    </location>
</feature>
<feature type="sequence conflict" description="In Ref. 2; AAM15730." evidence="14" ref="2">
    <original>C</original>
    <variation>G</variation>
    <location>
        <position position="283"/>
    </location>
</feature>
<reference key="1">
    <citation type="journal article" date="2003" name="Blood">
        <title>JAML, a novel protein with characteristics of a junctional adhesion molecule, is induced during differentiation of myeloid leukemia cells.</title>
        <authorList>
            <person name="Moog-Lutz C."/>
            <person name="Cave-Riant F."/>
            <person name="Guibal F.C."/>
            <person name="Breau M.A."/>
            <person name="Di Gioia Y."/>
            <person name="Couraud P.O."/>
            <person name="Cayre Y.E."/>
            <person name="Bourdoulous S."/>
            <person name="Lutz P.G."/>
        </authorList>
    </citation>
    <scope>NUCLEOTIDE SEQUENCE [MRNA] (ISOFORM 1)</scope>
    <scope>FUNCTION IN LEUKOCYTE MIGRATION</scope>
    <scope>INDUCTION</scope>
    <scope>SUBCELLULAR LOCATION</scope>
    <scope>DOMAIN</scope>
    <scope>TISSUE SPECIFICITY</scope>
    <scope>MUTAGENESIS OF LYS-54</scope>
    <scope>VARIANT ALA-193</scope>
    <source>
        <tissue>Bone marrow</tissue>
    </source>
</reference>
<reference key="2">
    <citation type="submission" date="2002-03" db="EMBL/GenBank/DDBJ databases">
        <title>Dendritic cell specific protein Crea7-1.</title>
        <authorList>
            <person name="Ahn J.H."/>
            <person name="Jung H.R."/>
            <person name="Lee B.-H."/>
            <person name="Jeon C.J."/>
            <person name="Bae Y.-S."/>
        </authorList>
    </citation>
    <scope>NUCLEOTIDE SEQUENCE [MRNA] (ISOFORM 1)</scope>
    <scope>VARIANTS ASN-94 AND ALA-193</scope>
    <source>
        <tissue>Dendritic cell</tissue>
    </source>
</reference>
<reference key="3">
    <citation type="journal article" date="2003" name="Genome Res.">
        <title>The secreted protein discovery initiative (SPDI), a large-scale effort to identify novel human secreted and transmembrane proteins: a bioinformatics assessment.</title>
        <authorList>
            <person name="Clark H.F."/>
            <person name="Gurney A.L."/>
            <person name="Abaya E."/>
            <person name="Baker K."/>
            <person name="Baldwin D.T."/>
            <person name="Brush J."/>
            <person name="Chen J."/>
            <person name="Chow B."/>
            <person name="Chui C."/>
            <person name="Crowley C."/>
            <person name="Currell B."/>
            <person name="Deuel B."/>
            <person name="Dowd P."/>
            <person name="Eaton D."/>
            <person name="Foster J.S."/>
            <person name="Grimaldi C."/>
            <person name="Gu Q."/>
            <person name="Hass P.E."/>
            <person name="Heldens S."/>
            <person name="Huang A."/>
            <person name="Kim H.S."/>
            <person name="Klimowski L."/>
            <person name="Jin Y."/>
            <person name="Johnson S."/>
            <person name="Lee J."/>
            <person name="Lewis L."/>
            <person name="Liao D."/>
            <person name="Mark M.R."/>
            <person name="Robbie E."/>
            <person name="Sanchez C."/>
            <person name="Schoenfeld J."/>
            <person name="Seshagiri S."/>
            <person name="Simmons L."/>
            <person name="Singh J."/>
            <person name="Smith V."/>
            <person name="Stinson J."/>
            <person name="Vagts A."/>
            <person name="Vandlen R.L."/>
            <person name="Watanabe C."/>
            <person name="Wieand D."/>
            <person name="Woods K."/>
            <person name="Xie M.-H."/>
            <person name="Yansura D.G."/>
            <person name="Yi S."/>
            <person name="Yu G."/>
            <person name="Yuan J."/>
            <person name="Zhang M."/>
            <person name="Zhang Z."/>
            <person name="Goddard A.D."/>
            <person name="Wood W.I."/>
            <person name="Godowski P.J."/>
            <person name="Gray A.M."/>
        </authorList>
    </citation>
    <scope>NUCLEOTIDE SEQUENCE [LARGE SCALE MRNA] (ISOFORM 1)</scope>
</reference>
<reference key="4">
    <citation type="journal article" date="2004" name="Nat. Genet.">
        <title>Complete sequencing and characterization of 21,243 full-length human cDNAs.</title>
        <authorList>
            <person name="Ota T."/>
            <person name="Suzuki Y."/>
            <person name="Nishikawa T."/>
            <person name="Otsuki T."/>
            <person name="Sugiyama T."/>
            <person name="Irie R."/>
            <person name="Wakamatsu A."/>
            <person name="Hayashi K."/>
            <person name="Sato H."/>
            <person name="Nagai K."/>
            <person name="Kimura K."/>
            <person name="Makita H."/>
            <person name="Sekine M."/>
            <person name="Obayashi M."/>
            <person name="Nishi T."/>
            <person name="Shibahara T."/>
            <person name="Tanaka T."/>
            <person name="Ishii S."/>
            <person name="Yamamoto J."/>
            <person name="Saito K."/>
            <person name="Kawai Y."/>
            <person name="Isono Y."/>
            <person name="Nakamura Y."/>
            <person name="Nagahari K."/>
            <person name="Murakami K."/>
            <person name="Yasuda T."/>
            <person name="Iwayanagi T."/>
            <person name="Wagatsuma M."/>
            <person name="Shiratori A."/>
            <person name="Sudo H."/>
            <person name="Hosoiri T."/>
            <person name="Kaku Y."/>
            <person name="Kodaira H."/>
            <person name="Kondo H."/>
            <person name="Sugawara M."/>
            <person name="Takahashi M."/>
            <person name="Kanda K."/>
            <person name="Yokoi T."/>
            <person name="Furuya T."/>
            <person name="Kikkawa E."/>
            <person name="Omura Y."/>
            <person name="Abe K."/>
            <person name="Kamihara K."/>
            <person name="Katsuta N."/>
            <person name="Sato K."/>
            <person name="Tanikawa M."/>
            <person name="Yamazaki M."/>
            <person name="Ninomiya K."/>
            <person name="Ishibashi T."/>
            <person name="Yamashita H."/>
            <person name="Murakawa K."/>
            <person name="Fujimori K."/>
            <person name="Tanai H."/>
            <person name="Kimata M."/>
            <person name="Watanabe M."/>
            <person name="Hiraoka S."/>
            <person name="Chiba Y."/>
            <person name="Ishida S."/>
            <person name="Ono Y."/>
            <person name="Takiguchi S."/>
            <person name="Watanabe S."/>
            <person name="Yosida M."/>
            <person name="Hotuta T."/>
            <person name="Kusano J."/>
            <person name="Kanehori K."/>
            <person name="Takahashi-Fujii A."/>
            <person name="Hara H."/>
            <person name="Tanase T.-O."/>
            <person name="Nomura Y."/>
            <person name="Togiya S."/>
            <person name="Komai F."/>
            <person name="Hara R."/>
            <person name="Takeuchi K."/>
            <person name="Arita M."/>
            <person name="Imose N."/>
            <person name="Musashino K."/>
            <person name="Yuuki H."/>
            <person name="Oshima A."/>
            <person name="Sasaki N."/>
            <person name="Aotsuka S."/>
            <person name="Yoshikawa Y."/>
            <person name="Matsunawa H."/>
            <person name="Ichihara T."/>
            <person name="Shiohata N."/>
            <person name="Sano S."/>
            <person name="Moriya S."/>
            <person name="Momiyama H."/>
            <person name="Satoh N."/>
            <person name="Takami S."/>
            <person name="Terashima Y."/>
            <person name="Suzuki O."/>
            <person name="Nakagawa S."/>
            <person name="Senoh A."/>
            <person name="Mizoguchi H."/>
            <person name="Goto Y."/>
            <person name="Shimizu F."/>
            <person name="Wakebe H."/>
            <person name="Hishigaki H."/>
            <person name="Watanabe T."/>
            <person name="Sugiyama A."/>
            <person name="Takemoto M."/>
            <person name="Kawakami B."/>
            <person name="Yamazaki M."/>
            <person name="Watanabe K."/>
            <person name="Kumagai A."/>
            <person name="Itakura S."/>
            <person name="Fukuzumi Y."/>
            <person name="Fujimori Y."/>
            <person name="Komiyama M."/>
            <person name="Tashiro H."/>
            <person name="Tanigami A."/>
            <person name="Fujiwara T."/>
            <person name="Ono T."/>
            <person name="Yamada K."/>
            <person name="Fujii Y."/>
            <person name="Ozaki K."/>
            <person name="Hirao M."/>
            <person name="Ohmori Y."/>
            <person name="Kawabata A."/>
            <person name="Hikiji T."/>
            <person name="Kobatake N."/>
            <person name="Inagaki H."/>
            <person name="Ikema Y."/>
            <person name="Okamoto S."/>
            <person name="Okitani R."/>
            <person name="Kawakami T."/>
            <person name="Noguchi S."/>
            <person name="Itoh T."/>
            <person name="Shigeta K."/>
            <person name="Senba T."/>
            <person name="Matsumura K."/>
            <person name="Nakajima Y."/>
            <person name="Mizuno T."/>
            <person name="Morinaga M."/>
            <person name="Sasaki M."/>
            <person name="Togashi T."/>
            <person name="Oyama M."/>
            <person name="Hata H."/>
            <person name="Watanabe M."/>
            <person name="Komatsu T."/>
            <person name="Mizushima-Sugano J."/>
            <person name="Satoh T."/>
            <person name="Shirai Y."/>
            <person name="Takahashi Y."/>
            <person name="Nakagawa K."/>
            <person name="Okumura K."/>
            <person name="Nagase T."/>
            <person name="Nomura N."/>
            <person name="Kikuchi H."/>
            <person name="Masuho Y."/>
            <person name="Yamashita R."/>
            <person name="Nakai K."/>
            <person name="Yada T."/>
            <person name="Nakamura Y."/>
            <person name="Ohara O."/>
            <person name="Isogai T."/>
            <person name="Sugano S."/>
        </authorList>
    </citation>
    <scope>NUCLEOTIDE SEQUENCE [LARGE SCALE MRNA] (ISOFORMS 2 AND 3)</scope>
    <scope>VARIANTS ASN-94 AND ALA-193</scope>
    <source>
        <tissue>Cerebellum</tissue>
        <tissue>Spleen</tissue>
    </source>
</reference>
<reference key="5">
    <citation type="submission" date="2007-02" db="EMBL/GenBank/DDBJ databases">
        <authorList>
            <consortium name="NHLBI resequencing and genotyping service (RS&amp;G)"/>
        </authorList>
    </citation>
    <scope>NUCLEOTIDE SEQUENCE [GENOMIC DNA]</scope>
</reference>
<reference key="6">
    <citation type="journal article" date="2006" name="Nature">
        <title>Human chromosome 11 DNA sequence and analysis including novel gene identification.</title>
        <authorList>
            <person name="Taylor T.D."/>
            <person name="Noguchi H."/>
            <person name="Totoki Y."/>
            <person name="Toyoda A."/>
            <person name="Kuroki Y."/>
            <person name="Dewar K."/>
            <person name="Lloyd C."/>
            <person name="Itoh T."/>
            <person name="Takeda T."/>
            <person name="Kim D.-W."/>
            <person name="She X."/>
            <person name="Barlow K.F."/>
            <person name="Bloom T."/>
            <person name="Bruford E."/>
            <person name="Chang J.L."/>
            <person name="Cuomo C.A."/>
            <person name="Eichler E."/>
            <person name="FitzGerald M.G."/>
            <person name="Jaffe D.B."/>
            <person name="LaButti K."/>
            <person name="Nicol R."/>
            <person name="Park H.-S."/>
            <person name="Seaman C."/>
            <person name="Sougnez C."/>
            <person name="Yang X."/>
            <person name="Zimmer A.R."/>
            <person name="Zody M.C."/>
            <person name="Birren B.W."/>
            <person name="Nusbaum C."/>
            <person name="Fujiyama A."/>
            <person name="Hattori M."/>
            <person name="Rogers J."/>
            <person name="Lander E.S."/>
            <person name="Sakaki Y."/>
        </authorList>
    </citation>
    <scope>NUCLEOTIDE SEQUENCE [LARGE SCALE GENOMIC DNA]</scope>
</reference>
<reference key="7">
    <citation type="journal article" date="2004" name="Genome Res.">
        <title>The status, quality, and expansion of the NIH full-length cDNA project: the Mammalian Gene Collection (MGC).</title>
        <authorList>
            <consortium name="The MGC Project Team"/>
        </authorList>
    </citation>
    <scope>NUCLEOTIDE SEQUENCE [LARGE SCALE MRNA] (ISOFORM 4)</scope>
</reference>
<reference key="8">
    <citation type="journal article" date="2004" name="Protein Sci.">
        <title>Signal peptide prediction based on analysis of experimentally verified cleavage sites.</title>
        <authorList>
            <person name="Zhang Z."/>
            <person name="Henzel W.J."/>
        </authorList>
    </citation>
    <scope>PROTEIN SEQUENCE OF 20-34</scope>
</reference>
<reference key="9">
    <citation type="journal article" date="2005" name="Mol. Biol. Cell">
        <title>Neutrophil migration across tight junctions is mediated by adhesive interactions between epithelial CAR and a JAM-like protein on neutrophils.</title>
        <authorList>
            <person name="Zen K."/>
            <person name="Liu Y."/>
            <person name="McCall I.C."/>
            <person name="Wu T."/>
            <person name="Lee W."/>
            <person name="Babbin B.A."/>
            <person name="Nusrat A."/>
            <person name="Parkos C.A."/>
        </authorList>
    </citation>
    <scope>FUNCTION IN LEUKOCYTE MIGRATION</scope>
    <scope>INTERACTION WITH CXADR</scope>
    <scope>SUBCELLULAR LOCATION</scope>
    <scope>DOMAIN</scope>
</reference>
<reference key="10">
    <citation type="journal article" date="2008" name="J. Cell Biol.">
        <title>JAM-L-mediated leukocyte adhesion to endothelial cells is regulated in cis by alpha4beta1 integrin activation.</title>
        <authorList>
            <person name="Luissint A.C."/>
            <person name="Lutz P.G."/>
            <person name="Calderwood D.A."/>
            <person name="Couraud P.O."/>
            <person name="Bourdoulous S."/>
        </authorList>
    </citation>
    <scope>FUNCTION IN LEUKOCYTE MIGRATION</scope>
    <scope>HOMODIMERIZATION</scope>
    <scope>MUTAGENESIS OF LYS-54</scope>
    <scope>INTERACTION WITH CXADR</scope>
    <scope>TISSUE SPECIFICITY</scope>
</reference>
<reference key="11">
    <citation type="journal article" date="2009" name="Arterioscler. Thromb. Vasc. Biol.">
        <title>Role of junctional adhesion molecule-like protein in mediating monocyte transendothelial migration.</title>
        <authorList>
            <person name="Guo Y.L."/>
            <person name="Bai R."/>
            <person name="Chen C.X."/>
            <person name="Liu D.Q."/>
            <person name="Liu Y."/>
            <person name="Zhang C.Y."/>
            <person name="Zen K."/>
        </authorList>
    </citation>
    <scope>FUNCTION IN LEUKOCYTE MIGRATION</scope>
    <scope>TISSUE SPECIFICITY</scope>
</reference>
<dbReference type="EMBL" id="AJ515553">
    <property type="protein sequence ID" value="CAD56620.2"/>
    <property type="molecule type" value="mRNA"/>
</dbReference>
<dbReference type="EMBL" id="AY093686">
    <property type="protein sequence ID" value="AAM15730.1"/>
    <property type="molecule type" value="mRNA"/>
</dbReference>
<dbReference type="EMBL" id="AY138965">
    <property type="protein sequence ID" value="AAN52117.1"/>
    <property type="molecule type" value="mRNA"/>
</dbReference>
<dbReference type="EMBL" id="AY358362">
    <property type="protein sequence ID" value="AAQ88728.1"/>
    <property type="molecule type" value="mRNA"/>
</dbReference>
<dbReference type="EMBL" id="AK090409">
    <property type="protein sequence ID" value="BAC03390.1"/>
    <property type="status" value="ALT_INIT"/>
    <property type="molecule type" value="mRNA"/>
</dbReference>
<dbReference type="EMBL" id="AK094399">
    <property type="protein sequence ID" value="BAC04347.1"/>
    <property type="molecule type" value="mRNA"/>
</dbReference>
<dbReference type="EMBL" id="EF444945">
    <property type="protein sequence ID" value="ACA05929.1"/>
    <property type="molecule type" value="Genomic_DNA"/>
</dbReference>
<dbReference type="EMBL" id="EF444945">
    <property type="protein sequence ID" value="ACA05930.1"/>
    <property type="molecule type" value="Genomic_DNA"/>
</dbReference>
<dbReference type="EMBL" id="AP002800">
    <property type="status" value="NOT_ANNOTATED_CDS"/>
    <property type="molecule type" value="Genomic_DNA"/>
</dbReference>
<dbReference type="EMBL" id="BC100797">
    <property type="protein sequence ID" value="AAI00798.1"/>
    <property type="molecule type" value="mRNA"/>
</dbReference>
<dbReference type="CCDS" id="CCDS41723.1">
    <molecule id="Q86YT9-1"/>
</dbReference>
<dbReference type="CCDS" id="CCDS66240.1">
    <molecule id="Q86YT9-4"/>
</dbReference>
<dbReference type="CCDS" id="CCDS8391.1">
    <molecule id="Q86YT9-2"/>
</dbReference>
<dbReference type="RefSeq" id="NP_001091996.1">
    <molecule id="Q86YT9-1"/>
    <property type="nucleotide sequence ID" value="NM_001098526.2"/>
</dbReference>
<dbReference type="RefSeq" id="NP_001273499.1">
    <molecule id="Q86YT9-4"/>
    <property type="nucleotide sequence ID" value="NM_001286570.2"/>
</dbReference>
<dbReference type="RefSeq" id="NP_001273500.1">
    <molecule id="Q86YT9-4"/>
    <property type="nucleotide sequence ID" value="NM_001286571.2"/>
</dbReference>
<dbReference type="RefSeq" id="NP_694938.2">
    <molecule id="Q86YT9-2"/>
    <property type="nucleotide sequence ID" value="NM_153206.3"/>
</dbReference>
<dbReference type="SMR" id="Q86YT9"/>
<dbReference type="BioGRID" id="125686">
    <property type="interactions" value="2"/>
</dbReference>
<dbReference type="FunCoup" id="Q86YT9">
    <property type="interactions" value="78"/>
</dbReference>
<dbReference type="IntAct" id="Q86YT9">
    <property type="interactions" value="5"/>
</dbReference>
<dbReference type="STRING" id="9606.ENSP00000348635"/>
<dbReference type="GlyCosmos" id="Q86YT9">
    <property type="glycosylation" value="3 sites, 1 glycan"/>
</dbReference>
<dbReference type="GlyGen" id="Q86YT9">
    <property type="glycosylation" value="4 sites, 1 O-linked glycan (1 site)"/>
</dbReference>
<dbReference type="iPTMnet" id="Q86YT9"/>
<dbReference type="PhosphoSitePlus" id="Q86YT9"/>
<dbReference type="SwissPalm" id="Q86YT9"/>
<dbReference type="BioMuta" id="JAML"/>
<dbReference type="DMDM" id="71151910"/>
<dbReference type="MassIVE" id="Q86YT9"/>
<dbReference type="PaxDb" id="9606-ENSP00000348635"/>
<dbReference type="PeptideAtlas" id="Q86YT9"/>
<dbReference type="ProteomicsDB" id="61996"/>
<dbReference type="ProteomicsDB" id="70469">
    <molecule id="Q86YT9-1"/>
</dbReference>
<dbReference type="ProteomicsDB" id="70470">
    <molecule id="Q86YT9-2"/>
</dbReference>
<dbReference type="ProteomicsDB" id="70471">
    <molecule id="Q86YT9-3"/>
</dbReference>
<dbReference type="Antibodypedia" id="32431">
    <property type="antibodies" value="280 antibodies from 26 providers"/>
</dbReference>
<dbReference type="DNASU" id="120425"/>
<dbReference type="Ensembl" id="ENST00000292067.11">
    <molecule id="Q86YT9-2"/>
    <property type="protein sequence ID" value="ENSP00000292067.7"/>
    <property type="gene ID" value="ENSG00000160593.20"/>
</dbReference>
<dbReference type="Ensembl" id="ENST00000356289.10">
    <molecule id="Q86YT9-1"/>
    <property type="protein sequence ID" value="ENSP00000348635.5"/>
    <property type="gene ID" value="ENSG00000160593.20"/>
</dbReference>
<dbReference type="Ensembl" id="ENST00000526620.5">
    <molecule id="Q86YT9-4"/>
    <property type="protein sequence ID" value="ENSP00000431218.1"/>
    <property type="gene ID" value="ENSG00000160593.20"/>
</dbReference>
<dbReference type="GeneID" id="120425"/>
<dbReference type="KEGG" id="hsa:120425"/>
<dbReference type="MANE-Select" id="ENST00000356289.10">
    <property type="protein sequence ID" value="ENSP00000348635.5"/>
    <property type="RefSeq nucleotide sequence ID" value="NM_001098526.2"/>
    <property type="RefSeq protein sequence ID" value="NP_001091996.1"/>
</dbReference>
<dbReference type="UCSC" id="uc001psi.3">
    <molecule id="Q86YT9-1"/>
    <property type="organism name" value="human"/>
</dbReference>
<dbReference type="AGR" id="HGNC:19084"/>
<dbReference type="CTD" id="120425"/>
<dbReference type="DisGeNET" id="120425"/>
<dbReference type="GeneCards" id="JAML"/>
<dbReference type="HGNC" id="HGNC:19084">
    <property type="gene designation" value="JAML"/>
</dbReference>
<dbReference type="HPA" id="ENSG00000160593">
    <property type="expression patterns" value="Tissue enhanced (lung, lymphoid tissue)"/>
</dbReference>
<dbReference type="MIM" id="609770">
    <property type="type" value="gene"/>
</dbReference>
<dbReference type="neXtProt" id="NX_Q86YT9"/>
<dbReference type="OpenTargets" id="ENSG00000160593"/>
<dbReference type="PharmGKB" id="PA38792"/>
<dbReference type="VEuPathDB" id="HostDB:ENSG00000160593"/>
<dbReference type="eggNOG" id="ENOG502SVGE">
    <property type="taxonomic scope" value="Eukaryota"/>
</dbReference>
<dbReference type="GeneTree" id="ENSGT01030000234556"/>
<dbReference type="InParanoid" id="Q86YT9"/>
<dbReference type="OMA" id="NDGAIML"/>
<dbReference type="OrthoDB" id="10012075at2759"/>
<dbReference type="PAN-GO" id="Q86YT9">
    <property type="GO annotations" value="6 GO annotations based on evolutionary models"/>
</dbReference>
<dbReference type="PhylomeDB" id="Q86YT9"/>
<dbReference type="TreeFam" id="TF331728"/>
<dbReference type="PathwayCommons" id="Q86YT9"/>
<dbReference type="Reactome" id="R-HSA-198933">
    <property type="pathway name" value="Immunoregulatory interactions between a Lymphoid and a non-Lymphoid cell"/>
</dbReference>
<dbReference type="Reactome" id="R-HSA-202733">
    <property type="pathway name" value="Cell surface interactions at the vascular wall"/>
</dbReference>
<dbReference type="SignaLink" id="Q86YT9"/>
<dbReference type="BioGRID-ORCS" id="120425">
    <property type="hits" value="9 hits in 1138 CRISPR screens"/>
</dbReference>
<dbReference type="ChiTaRS" id="JAML">
    <property type="organism name" value="human"/>
</dbReference>
<dbReference type="GeneWiki" id="AMICA1"/>
<dbReference type="GenomeRNAi" id="120425"/>
<dbReference type="Pharos" id="Q86YT9">
    <property type="development level" value="Tbio"/>
</dbReference>
<dbReference type="PRO" id="PR:Q86YT9"/>
<dbReference type="Proteomes" id="UP000005640">
    <property type="component" value="Chromosome 11"/>
</dbReference>
<dbReference type="RNAct" id="Q86YT9">
    <property type="molecule type" value="protein"/>
</dbReference>
<dbReference type="Bgee" id="ENSG00000160593">
    <property type="expression patterns" value="Expressed in monocyte and 157 other cell types or tissues"/>
</dbReference>
<dbReference type="ExpressionAtlas" id="Q86YT9">
    <property type="expression patterns" value="baseline and differential"/>
</dbReference>
<dbReference type="GO" id="GO:0005923">
    <property type="term" value="C:bicellular tight junction"/>
    <property type="evidence" value="ECO:0000314"/>
    <property type="project" value="UniProtKB"/>
</dbReference>
<dbReference type="GO" id="GO:0005654">
    <property type="term" value="C:nucleoplasm"/>
    <property type="evidence" value="ECO:0000314"/>
    <property type="project" value="HPA"/>
</dbReference>
<dbReference type="GO" id="GO:0005886">
    <property type="term" value="C:plasma membrane"/>
    <property type="evidence" value="ECO:0000314"/>
    <property type="project" value="HPA"/>
</dbReference>
<dbReference type="GO" id="GO:0050839">
    <property type="term" value="F:cell adhesion molecule binding"/>
    <property type="evidence" value="ECO:0000353"/>
    <property type="project" value="UniProtKB"/>
</dbReference>
<dbReference type="GO" id="GO:0005178">
    <property type="term" value="F:integrin binding"/>
    <property type="evidence" value="ECO:0000353"/>
    <property type="project" value="UniProtKB"/>
</dbReference>
<dbReference type="GO" id="GO:0042803">
    <property type="term" value="F:protein homodimerization activity"/>
    <property type="evidence" value="ECO:0000314"/>
    <property type="project" value="UniProtKB"/>
</dbReference>
<dbReference type="GO" id="GO:0046629">
    <property type="term" value="P:gamma-delta T cell activation"/>
    <property type="evidence" value="ECO:0000250"/>
    <property type="project" value="UniProtKB"/>
</dbReference>
<dbReference type="GO" id="GO:0007157">
    <property type="term" value="P:heterophilic cell-cell adhesion via plasma membrane cell adhesion molecules"/>
    <property type="evidence" value="ECO:0000314"/>
    <property type="project" value="UniProtKB"/>
</dbReference>
<dbReference type="GO" id="GO:0035696">
    <property type="term" value="P:monocyte extravasation"/>
    <property type="evidence" value="ECO:0000315"/>
    <property type="project" value="UniProtKB"/>
</dbReference>
<dbReference type="GO" id="GO:0030593">
    <property type="term" value="P:neutrophil chemotaxis"/>
    <property type="evidence" value="ECO:0000315"/>
    <property type="project" value="UniProtKB"/>
</dbReference>
<dbReference type="GO" id="GO:0072672">
    <property type="term" value="P:neutrophil extravasation"/>
    <property type="evidence" value="ECO:0000315"/>
    <property type="project" value="UniProtKB"/>
</dbReference>
<dbReference type="GO" id="GO:0060054">
    <property type="term" value="P:positive regulation of epithelial cell proliferation involved in wound healing"/>
    <property type="evidence" value="ECO:0000250"/>
    <property type="project" value="UniProtKB"/>
</dbReference>
<dbReference type="FunFam" id="2.60.40.10:FF:000736">
    <property type="entry name" value="Junctional adhesion molecule-like"/>
    <property type="match status" value="2"/>
</dbReference>
<dbReference type="Gene3D" id="2.60.40.10">
    <property type="entry name" value="Immunoglobulins"/>
    <property type="match status" value="2"/>
</dbReference>
<dbReference type="InterPro" id="IPR007110">
    <property type="entry name" value="Ig-like_dom"/>
</dbReference>
<dbReference type="InterPro" id="IPR036179">
    <property type="entry name" value="Ig-like_dom_sf"/>
</dbReference>
<dbReference type="InterPro" id="IPR013783">
    <property type="entry name" value="Ig-like_fold"/>
</dbReference>
<dbReference type="InterPro" id="IPR003599">
    <property type="entry name" value="Ig_sub"/>
</dbReference>
<dbReference type="InterPro" id="IPR013106">
    <property type="entry name" value="Ig_V-set"/>
</dbReference>
<dbReference type="InterPro" id="IPR000920">
    <property type="entry name" value="Myelin_P0-rel"/>
</dbReference>
<dbReference type="PANTHER" id="PTHR13869:SF22">
    <property type="entry name" value="JUNCTIONAL ADHESION MOLECULE-LIKE"/>
    <property type="match status" value="1"/>
</dbReference>
<dbReference type="PANTHER" id="PTHR13869">
    <property type="entry name" value="MYELIN P0 RELATED"/>
    <property type="match status" value="1"/>
</dbReference>
<dbReference type="Pfam" id="PF07686">
    <property type="entry name" value="V-set"/>
    <property type="match status" value="2"/>
</dbReference>
<dbReference type="SMART" id="SM00409">
    <property type="entry name" value="IG"/>
    <property type="match status" value="2"/>
</dbReference>
<dbReference type="SUPFAM" id="SSF48726">
    <property type="entry name" value="Immunoglobulin"/>
    <property type="match status" value="2"/>
</dbReference>
<dbReference type="PROSITE" id="PS50835">
    <property type="entry name" value="IG_LIKE"/>
    <property type="match status" value="2"/>
</dbReference>
<accession>Q86YT9</accession>
<accession>B0YIV1</accession>
<accession>B0YIV2</accession>
<accession>Q496M1</accession>
<accession>Q5DTC6</accession>
<accession>Q7Z499</accession>
<accession>Q8N9I7</accession>
<accession>Q8NF70</accession>
<name>JAML_HUMAN</name>
<sequence length="394" mass="44339">MFCPLKLILLPVLLDYSLGLNDLNVSPPELTVHVGDSALMGCVFQSTEDKCIFKIDWTLSPGEHAKDEYVLYYYSNLSVPIGRFQNRVHLMGDILCNDGSLLLQDVQEADQGTYICEIRLKGESQVFKKAVVLHVLPEEPKELMVHVGGLIQMGCVFQSTEVKHVTKVEWIFSGRRAKEEIVFRYYHKLRMSVEYSQSWGHFQNRVNLVGDIFRNDGSIMLQGVRESDGGNYTCSIHLGNLVFKKTIVLHVSPEEPRTLVTPAALRPLVLGGNQLVIIVGIVCATILLLPVLILIVKKTCGNKSSVNSTVLVKNTKKTNPEIKEKPCHFERCEGEKHIYSPIIVREVIEEEEPSEKSEATYMTMHPVWPSLRSDRNNSLEKKSGGGMPKTQQAF</sequence>
<protein>
    <recommendedName>
        <fullName evidence="15">Junctional adhesion molecule-like</fullName>
    </recommendedName>
    <alternativeName>
        <fullName>Adhesion molecule interacting with CXADR antigen 1</fullName>
    </alternativeName>
    <alternativeName>
        <fullName>Dendritic cell-specific protein CREA7-1</fullName>
    </alternativeName>
</protein>
<organism>
    <name type="scientific">Homo sapiens</name>
    <name type="common">Human</name>
    <dbReference type="NCBI Taxonomy" id="9606"/>
    <lineage>
        <taxon>Eukaryota</taxon>
        <taxon>Metazoa</taxon>
        <taxon>Chordata</taxon>
        <taxon>Craniata</taxon>
        <taxon>Vertebrata</taxon>
        <taxon>Euteleostomi</taxon>
        <taxon>Mammalia</taxon>
        <taxon>Eutheria</taxon>
        <taxon>Euarchontoglires</taxon>
        <taxon>Primates</taxon>
        <taxon>Haplorrhini</taxon>
        <taxon>Catarrhini</taxon>
        <taxon>Hominidae</taxon>
        <taxon>Homo</taxon>
    </lineage>
</organism>